<name>RL17_STRS2</name>
<evidence type="ECO:0000255" key="1">
    <source>
        <dbReference type="HAMAP-Rule" id="MF_01368"/>
    </source>
</evidence>
<evidence type="ECO:0000305" key="2"/>
<accession>A4VYR9</accession>
<proteinExistence type="inferred from homology"/>
<protein>
    <recommendedName>
        <fullName evidence="1">Large ribosomal subunit protein bL17</fullName>
    </recommendedName>
    <alternativeName>
        <fullName evidence="2">50S ribosomal protein L17</fullName>
    </alternativeName>
</protein>
<comment type="subunit">
    <text evidence="1">Part of the 50S ribosomal subunit. Contacts protein L32.</text>
</comment>
<comment type="similarity">
    <text evidence="1">Belongs to the bacterial ribosomal protein bL17 family.</text>
</comment>
<feature type="chain" id="PRO_1000055969" description="Large ribosomal subunit protein bL17">
    <location>
        <begin position="1"/>
        <end position="128"/>
    </location>
</feature>
<dbReference type="EMBL" id="CP000408">
    <property type="protein sequence ID" value="ABP91258.1"/>
    <property type="molecule type" value="Genomic_DNA"/>
</dbReference>
<dbReference type="SMR" id="A4VYR9"/>
<dbReference type="KEGG" id="ssv:SSU98_0098"/>
<dbReference type="HOGENOM" id="CLU_074407_2_2_9"/>
<dbReference type="GO" id="GO:0022625">
    <property type="term" value="C:cytosolic large ribosomal subunit"/>
    <property type="evidence" value="ECO:0007669"/>
    <property type="project" value="TreeGrafter"/>
</dbReference>
<dbReference type="GO" id="GO:0003735">
    <property type="term" value="F:structural constituent of ribosome"/>
    <property type="evidence" value="ECO:0007669"/>
    <property type="project" value="InterPro"/>
</dbReference>
<dbReference type="GO" id="GO:0006412">
    <property type="term" value="P:translation"/>
    <property type="evidence" value="ECO:0007669"/>
    <property type="project" value="UniProtKB-UniRule"/>
</dbReference>
<dbReference type="FunFam" id="3.90.1030.10:FF:000002">
    <property type="entry name" value="50S ribosomal protein L17"/>
    <property type="match status" value="1"/>
</dbReference>
<dbReference type="Gene3D" id="3.90.1030.10">
    <property type="entry name" value="Ribosomal protein L17"/>
    <property type="match status" value="1"/>
</dbReference>
<dbReference type="HAMAP" id="MF_01368">
    <property type="entry name" value="Ribosomal_bL17"/>
    <property type="match status" value="1"/>
</dbReference>
<dbReference type="InterPro" id="IPR000456">
    <property type="entry name" value="Ribosomal_bL17"/>
</dbReference>
<dbReference type="InterPro" id="IPR036373">
    <property type="entry name" value="Ribosomal_bL17_sf"/>
</dbReference>
<dbReference type="NCBIfam" id="TIGR00059">
    <property type="entry name" value="L17"/>
    <property type="match status" value="1"/>
</dbReference>
<dbReference type="PANTHER" id="PTHR14413:SF16">
    <property type="entry name" value="LARGE RIBOSOMAL SUBUNIT PROTEIN BL17M"/>
    <property type="match status" value="1"/>
</dbReference>
<dbReference type="PANTHER" id="PTHR14413">
    <property type="entry name" value="RIBOSOMAL PROTEIN L17"/>
    <property type="match status" value="1"/>
</dbReference>
<dbReference type="Pfam" id="PF01196">
    <property type="entry name" value="Ribosomal_L17"/>
    <property type="match status" value="1"/>
</dbReference>
<dbReference type="SUPFAM" id="SSF64263">
    <property type="entry name" value="Prokaryotic ribosomal protein L17"/>
    <property type="match status" value="1"/>
</dbReference>
<sequence>MAYRKLGRTSSQRKAMLRDLTTDLLINESIVTSEARAKEIRNTVEKMITLGKRGDLHACGQAAAFVRNVIASADYDEATDKYTSATALHKLFSEIAPLYADRTVRYTRILKTEPRRGDAAPMAIIELV</sequence>
<gene>
    <name evidence="1" type="primary">rplQ</name>
    <name type="ordered locus">SSU98_0098</name>
</gene>
<reference key="1">
    <citation type="journal article" date="2007" name="PLoS ONE">
        <title>A glimpse of streptococcal toxic shock syndrome from comparative genomics of S. suis 2 Chinese isolates.</title>
        <authorList>
            <person name="Chen C."/>
            <person name="Tang J."/>
            <person name="Dong W."/>
            <person name="Wang C."/>
            <person name="Feng Y."/>
            <person name="Wang J."/>
            <person name="Zheng F."/>
            <person name="Pan X."/>
            <person name="Liu D."/>
            <person name="Li M."/>
            <person name="Song Y."/>
            <person name="Zhu X."/>
            <person name="Sun H."/>
            <person name="Feng T."/>
            <person name="Guo Z."/>
            <person name="Ju A."/>
            <person name="Ge J."/>
            <person name="Dong Y."/>
            <person name="Sun W."/>
            <person name="Jiang Y."/>
            <person name="Wang J."/>
            <person name="Yan J."/>
            <person name="Yang H."/>
            <person name="Wang X."/>
            <person name="Gao G.F."/>
            <person name="Yang R."/>
            <person name="Wang J."/>
            <person name="Yu J."/>
        </authorList>
    </citation>
    <scope>NUCLEOTIDE SEQUENCE [LARGE SCALE GENOMIC DNA]</scope>
    <source>
        <strain>98HAH33</strain>
    </source>
</reference>
<organism>
    <name type="scientific">Streptococcus suis (strain 98HAH33)</name>
    <dbReference type="NCBI Taxonomy" id="391296"/>
    <lineage>
        <taxon>Bacteria</taxon>
        <taxon>Bacillati</taxon>
        <taxon>Bacillota</taxon>
        <taxon>Bacilli</taxon>
        <taxon>Lactobacillales</taxon>
        <taxon>Streptococcaceae</taxon>
        <taxon>Streptococcus</taxon>
    </lineage>
</organism>
<keyword id="KW-0687">Ribonucleoprotein</keyword>
<keyword id="KW-0689">Ribosomal protein</keyword>